<reference key="1">
    <citation type="journal article" date="2007" name="Mol. Plant Microbe Interact.">
        <title>The genomic dynamics and evolutionary mechanism of the Pi2/9 locus in rice.</title>
        <authorList>
            <person name="Zhou B."/>
            <person name="Dolan M."/>
            <person name="Sakai H."/>
            <person name="Wang G.L."/>
        </authorList>
    </citation>
    <scope>NUCLEOTIDE SEQUENCE [GENOMIC DNA]</scope>
</reference>
<reference key="2">
    <citation type="journal article" date="2005" name="Nature">
        <title>The map-based sequence of the rice genome.</title>
        <authorList>
            <consortium name="International rice genome sequencing project (IRGSP)"/>
        </authorList>
    </citation>
    <scope>NUCLEOTIDE SEQUENCE [LARGE SCALE GENOMIC DNA]</scope>
    <source>
        <strain>cv. Nipponbare</strain>
    </source>
</reference>
<reference key="3">
    <citation type="journal article" date="2008" name="Nucleic Acids Res.">
        <title>The rice annotation project database (RAP-DB): 2008 update.</title>
        <authorList>
            <consortium name="The rice annotation project (RAP)"/>
        </authorList>
    </citation>
    <scope>GENOME REANNOTATION</scope>
    <source>
        <strain>cv. Nipponbare</strain>
    </source>
</reference>
<reference key="4">
    <citation type="journal article" date="2013" name="Rice">
        <title>Improvement of the Oryza sativa Nipponbare reference genome using next generation sequence and optical map data.</title>
        <authorList>
            <person name="Kawahara Y."/>
            <person name="de la Bastide M."/>
            <person name="Hamilton J.P."/>
            <person name="Kanamori H."/>
            <person name="McCombie W.R."/>
            <person name="Ouyang S."/>
            <person name="Schwartz D.C."/>
            <person name="Tanaka T."/>
            <person name="Wu J."/>
            <person name="Zhou S."/>
            <person name="Childs K.L."/>
            <person name="Davidson R.M."/>
            <person name="Lin H."/>
            <person name="Quesada-Ocampo L."/>
            <person name="Vaillancourt B."/>
            <person name="Sakai H."/>
            <person name="Lee S.S."/>
            <person name="Kim J."/>
            <person name="Numa H."/>
            <person name="Itoh T."/>
            <person name="Buell C.R."/>
            <person name="Matsumoto T."/>
        </authorList>
    </citation>
    <scope>GENOME REANNOTATION</scope>
    <source>
        <strain>cv. Nipponbare</strain>
    </source>
</reference>
<reference key="5">
    <citation type="journal article" date="2005" name="PLoS Biol.">
        <title>The genomes of Oryza sativa: a history of duplications.</title>
        <authorList>
            <person name="Yu J."/>
            <person name="Wang J."/>
            <person name="Lin W."/>
            <person name="Li S."/>
            <person name="Li H."/>
            <person name="Zhou J."/>
            <person name="Ni P."/>
            <person name="Dong W."/>
            <person name="Hu S."/>
            <person name="Zeng C."/>
            <person name="Zhang J."/>
            <person name="Zhang Y."/>
            <person name="Li R."/>
            <person name="Xu Z."/>
            <person name="Li S."/>
            <person name="Li X."/>
            <person name="Zheng H."/>
            <person name="Cong L."/>
            <person name="Lin L."/>
            <person name="Yin J."/>
            <person name="Geng J."/>
            <person name="Li G."/>
            <person name="Shi J."/>
            <person name="Liu J."/>
            <person name="Lv H."/>
            <person name="Li J."/>
            <person name="Wang J."/>
            <person name="Deng Y."/>
            <person name="Ran L."/>
            <person name="Shi X."/>
            <person name="Wang X."/>
            <person name="Wu Q."/>
            <person name="Li C."/>
            <person name="Ren X."/>
            <person name="Wang J."/>
            <person name="Wang X."/>
            <person name="Li D."/>
            <person name="Liu D."/>
            <person name="Zhang X."/>
            <person name="Ji Z."/>
            <person name="Zhao W."/>
            <person name="Sun Y."/>
            <person name="Zhang Z."/>
            <person name="Bao J."/>
            <person name="Han Y."/>
            <person name="Dong L."/>
            <person name="Ji J."/>
            <person name="Chen P."/>
            <person name="Wu S."/>
            <person name="Liu J."/>
            <person name="Xiao Y."/>
            <person name="Bu D."/>
            <person name="Tan J."/>
            <person name="Yang L."/>
            <person name="Ye C."/>
            <person name="Zhang J."/>
            <person name="Xu J."/>
            <person name="Zhou Y."/>
            <person name="Yu Y."/>
            <person name="Zhang B."/>
            <person name="Zhuang S."/>
            <person name="Wei H."/>
            <person name="Liu B."/>
            <person name="Lei M."/>
            <person name="Yu H."/>
            <person name="Li Y."/>
            <person name="Xu H."/>
            <person name="Wei S."/>
            <person name="He X."/>
            <person name="Fang L."/>
            <person name="Zhang Z."/>
            <person name="Zhang Y."/>
            <person name="Huang X."/>
            <person name="Su Z."/>
            <person name="Tong W."/>
            <person name="Li J."/>
            <person name="Tong Z."/>
            <person name="Li S."/>
            <person name="Ye J."/>
            <person name="Wang L."/>
            <person name="Fang L."/>
            <person name="Lei T."/>
            <person name="Chen C.-S."/>
            <person name="Chen H.-C."/>
            <person name="Xu Z."/>
            <person name="Li H."/>
            <person name="Huang H."/>
            <person name="Zhang F."/>
            <person name="Xu H."/>
            <person name="Li N."/>
            <person name="Zhao C."/>
            <person name="Li S."/>
            <person name="Dong L."/>
            <person name="Huang Y."/>
            <person name="Li L."/>
            <person name="Xi Y."/>
            <person name="Qi Q."/>
            <person name="Li W."/>
            <person name="Zhang B."/>
            <person name="Hu W."/>
            <person name="Zhang Y."/>
            <person name="Tian X."/>
            <person name="Jiao Y."/>
            <person name="Liang X."/>
            <person name="Jin J."/>
            <person name="Gao L."/>
            <person name="Zheng W."/>
            <person name="Hao B."/>
            <person name="Liu S.-M."/>
            <person name="Wang W."/>
            <person name="Yuan L."/>
            <person name="Cao M."/>
            <person name="McDermott J."/>
            <person name="Samudrala R."/>
            <person name="Wang J."/>
            <person name="Wong G.K.-S."/>
            <person name="Yang H."/>
        </authorList>
    </citation>
    <scope>NUCLEOTIDE SEQUENCE [LARGE SCALE GENOMIC DNA]</scope>
    <source>
        <strain>cv. Nipponbare</strain>
    </source>
</reference>
<protein>
    <recommendedName>
        <fullName evidence="4">UDP-glycosyltransferase CGT</fullName>
        <ecNumber evidence="2">2.4.1.360</ecNumber>
    </recommendedName>
    <alternativeName>
        <fullName evidence="4">UDP-glucose:2-hydroxyflavanone C-glucosyltransferase</fullName>
        <shortName evidence="4">OsCGT</shortName>
    </alternativeName>
</protein>
<organism evidence="10">
    <name type="scientific">Oryza sativa subsp. japonica</name>
    <name type="common">Rice</name>
    <dbReference type="NCBI Taxonomy" id="39947"/>
    <lineage>
        <taxon>Eukaryota</taxon>
        <taxon>Viridiplantae</taxon>
        <taxon>Streptophyta</taxon>
        <taxon>Embryophyta</taxon>
        <taxon>Tracheophyta</taxon>
        <taxon>Spermatophyta</taxon>
        <taxon>Magnoliopsida</taxon>
        <taxon>Liliopsida</taxon>
        <taxon>Poales</taxon>
        <taxon>Poaceae</taxon>
        <taxon>BOP clade</taxon>
        <taxon>Oryzoideae</taxon>
        <taxon>Oryzeae</taxon>
        <taxon>Oryzinae</taxon>
        <taxon>Oryza</taxon>
        <taxon>Oryza sativa</taxon>
    </lineage>
</organism>
<keyword id="KW-0328">Glycosyltransferase</keyword>
<keyword id="KW-1185">Reference proteome</keyword>
<keyword id="KW-0808">Transferase</keyword>
<name>CGT_ORYSJ</name>
<gene>
    <name evidence="4" type="primary">CGT</name>
    <name evidence="8" type="ordered locus">Os06g0288300</name>
    <name evidence="4" type="ordered locus">LOC_Os06g18010</name>
    <name evidence="7" type="ORF">B1197G05.8</name>
    <name evidence="5" type="ORF">b29O05.13</name>
    <name evidence="9" type="ORF">OsJ_21017</name>
    <name evidence="6" type="ORF">P0649C11.32</name>
</gene>
<sequence>MPSSGDAAGRRPHVVLIPSAGMGHLVPFGRLAVALSSGHGCDVSLVTVLPTVSTAESKHLDALFDAFPAVRRLDFELAPFDASEFPSADPFFLRFEAMRRSAPLLGPLLTGAGASALATDIALTSVVIPVAKEQGLPCHILFTASAAMLSLCAYFPTYLDANAGDGGGVGDVDIPGVYRIPKASIPQALHDPNHLFTRQFVANGRSLTSAAGILVNTFDALEPEAVAALQQGKVASGFPPVFAVGPLLPASNQAKDPQANYMEWLDAQPARSVVYVSFGSRKAISGEQLRELAAGLETSGHRFLWVVKSTVVDRDDAAELGELLGEGFLKRVEKRGLVTKAWVDQEEVLKHESVALFVSHCGWNSVTEAAASGVPVLALPRFGDQRVNSGVVARAGLGVWADTWSWEGEAGVIGAEEISEKVKAAMADEALRRKAASLAKAAAKAVAGGGSSHRCLVEFARLCQGGTCRTN</sequence>
<proteinExistence type="inferred from homology"/>
<comment type="function">
    <text evidence="2">UDP-glucose-dependent glucosyltransferase catalyzing the c-glucosylation of 2-hydroxyflavanones.</text>
</comment>
<comment type="catalytic activity">
    <reaction evidence="2">
        <text>a 3'-hydro-2'-hydroxy-beta-oxodihydrochalcone + UDP-alpha-D-glucose = a 3'-(beta-D-glucopyranosyl)-2'-hydroxy-beta-oxodihydrochalcone + UDP + H(+)</text>
        <dbReference type="Rhea" id="RHEA:51504"/>
        <dbReference type="ChEBI" id="CHEBI:15378"/>
        <dbReference type="ChEBI" id="CHEBI:58223"/>
        <dbReference type="ChEBI" id="CHEBI:58885"/>
        <dbReference type="ChEBI" id="CHEBI:142482"/>
        <dbReference type="ChEBI" id="CHEBI:142483"/>
        <dbReference type="EC" id="2.4.1.360"/>
    </reaction>
    <physiologicalReaction direction="left-to-right" evidence="2">
        <dbReference type="Rhea" id="RHEA:51505"/>
    </physiologicalReaction>
</comment>
<comment type="similarity">
    <text evidence="4">Belongs to the UDP-glycosyltransferase family.</text>
</comment>
<comment type="sequence caution" evidence="4">
    <conflict type="erroneous gene model prediction">
        <sequence resource="EMBL-CDS" id="EEE65546"/>
    </conflict>
</comment>
<dbReference type="EC" id="2.4.1.360" evidence="2"/>
<dbReference type="EMBL" id="DQ454158">
    <property type="protein sequence ID" value="ABE02743.1"/>
    <property type="molecule type" value="Genomic_DNA"/>
</dbReference>
<dbReference type="EMBL" id="AP005659">
    <property type="protein sequence ID" value="BAD69117.1"/>
    <property type="molecule type" value="Genomic_DNA"/>
</dbReference>
<dbReference type="EMBL" id="AP006584">
    <property type="protein sequence ID" value="BAD69345.1"/>
    <property type="molecule type" value="Genomic_DNA"/>
</dbReference>
<dbReference type="EMBL" id="AP008212">
    <property type="protein sequence ID" value="BAH93454.1"/>
    <property type="molecule type" value="Genomic_DNA"/>
</dbReference>
<dbReference type="EMBL" id="AP014962">
    <property type="protein sequence ID" value="BAS97297.1"/>
    <property type="molecule type" value="Genomic_DNA"/>
</dbReference>
<dbReference type="EMBL" id="CM000143">
    <property type="protein sequence ID" value="EEE65546.1"/>
    <property type="status" value="ALT_SEQ"/>
    <property type="molecule type" value="Genomic_DNA"/>
</dbReference>
<dbReference type="SMR" id="Q5VMI0"/>
<dbReference type="FunCoup" id="Q5VMI0">
    <property type="interactions" value="2"/>
</dbReference>
<dbReference type="STRING" id="39947.Q5VMI0"/>
<dbReference type="CAZy" id="GT1">
    <property type="family name" value="Glycosyltransferase Family 1"/>
</dbReference>
<dbReference type="PaxDb" id="39947-Q5VMI0"/>
<dbReference type="EnsemblPlants" id="Os06t0288300-01">
    <property type="protein sequence ID" value="Os06t0288300-01"/>
    <property type="gene ID" value="Os06g0288300"/>
</dbReference>
<dbReference type="GeneID" id="9266253"/>
<dbReference type="Gramene" id="Os06t0288300-01">
    <property type="protein sequence ID" value="Os06t0288300-01"/>
    <property type="gene ID" value="Os06g0288300"/>
</dbReference>
<dbReference type="KEGG" id="dosa:Os06g0288200"/>
<dbReference type="KEGG" id="osa:9266253"/>
<dbReference type="eggNOG" id="KOG1192">
    <property type="taxonomic scope" value="Eukaryota"/>
</dbReference>
<dbReference type="HOGENOM" id="CLU_001724_3_1_1"/>
<dbReference type="InParanoid" id="Q5VMI0"/>
<dbReference type="OMA" id="LCAYFPA"/>
<dbReference type="OrthoDB" id="5835829at2759"/>
<dbReference type="BRENDA" id="2.4.1.360">
    <property type="organism ID" value="8948"/>
</dbReference>
<dbReference type="Proteomes" id="UP000000763">
    <property type="component" value="Chromosome 6"/>
</dbReference>
<dbReference type="Proteomes" id="UP000007752">
    <property type="component" value="Chromosome 6"/>
</dbReference>
<dbReference type="Proteomes" id="UP000059680">
    <property type="component" value="Chromosome 6"/>
</dbReference>
<dbReference type="GO" id="GO:0120514">
    <property type="term" value="F:2-hydroxyflavanone C-glucosyltransferase activity"/>
    <property type="evidence" value="ECO:0007669"/>
    <property type="project" value="UniProtKB-EC"/>
</dbReference>
<dbReference type="GO" id="GO:0035251">
    <property type="term" value="F:UDP-glucosyltransferase activity"/>
    <property type="evidence" value="ECO:0000250"/>
    <property type="project" value="UniProtKB"/>
</dbReference>
<dbReference type="CDD" id="cd03784">
    <property type="entry name" value="GT1_Gtf-like"/>
    <property type="match status" value="1"/>
</dbReference>
<dbReference type="FunFam" id="3.40.50.2000:FF:000124">
    <property type="entry name" value="Glycosyltransferase"/>
    <property type="match status" value="1"/>
</dbReference>
<dbReference type="FunFam" id="3.40.50.2000:FF:000127">
    <property type="entry name" value="Glycosyltransferase"/>
    <property type="match status" value="1"/>
</dbReference>
<dbReference type="Gene3D" id="3.40.50.2000">
    <property type="entry name" value="Glycogen Phosphorylase B"/>
    <property type="match status" value="2"/>
</dbReference>
<dbReference type="InterPro" id="IPR050481">
    <property type="entry name" value="UDP-glycosyltransf_plant"/>
</dbReference>
<dbReference type="InterPro" id="IPR002213">
    <property type="entry name" value="UDP_glucos_trans"/>
</dbReference>
<dbReference type="InterPro" id="IPR035595">
    <property type="entry name" value="UDP_glycos_trans_CS"/>
</dbReference>
<dbReference type="PANTHER" id="PTHR48048">
    <property type="entry name" value="GLYCOSYLTRANSFERASE"/>
    <property type="match status" value="1"/>
</dbReference>
<dbReference type="PANTHER" id="PTHR48048:SF76">
    <property type="entry name" value="UDP-GLYCOSYLTRANSFERASE 708D1-LIKE"/>
    <property type="match status" value="1"/>
</dbReference>
<dbReference type="Pfam" id="PF00201">
    <property type="entry name" value="UDPGT"/>
    <property type="match status" value="1"/>
</dbReference>
<dbReference type="SUPFAM" id="SSF53756">
    <property type="entry name" value="UDP-Glycosyltransferase/glycogen phosphorylase"/>
    <property type="match status" value="1"/>
</dbReference>
<dbReference type="PROSITE" id="PS00375">
    <property type="entry name" value="UDPGT"/>
    <property type="match status" value="1"/>
</dbReference>
<feature type="chain" id="PRO_0000436257" description="UDP-glycosyltransferase CGT">
    <location>
        <begin position="1"/>
        <end position="471"/>
    </location>
</feature>
<feature type="region of interest" description="UDP" evidence="1">
    <location>
        <begin position="280"/>
        <end position="281"/>
    </location>
</feature>
<feature type="active site" description="Proton acceptor" evidence="1">
    <location>
        <position position="24"/>
    </location>
</feature>
<feature type="active site" description="Charge relay" evidence="1">
    <location>
        <position position="120"/>
    </location>
</feature>
<feature type="binding site" evidence="3">
    <location>
        <position position="24"/>
    </location>
    <ligand>
        <name>an anthocyanidin</name>
        <dbReference type="ChEBI" id="CHEBI:143576"/>
    </ligand>
</feature>
<feature type="binding site" evidence="1">
    <location>
        <position position="143"/>
    </location>
    <ligand>
        <name>UDP-alpha-D-glucose</name>
        <dbReference type="ChEBI" id="CHEBI:58885"/>
    </ligand>
</feature>
<feature type="binding site" evidence="1">
    <location>
        <position position="343"/>
    </location>
    <ligand>
        <name>UDP-alpha-D-glucose</name>
        <dbReference type="ChEBI" id="CHEBI:58885"/>
    </ligand>
</feature>
<feature type="binding site" evidence="1">
    <location>
        <position position="345"/>
    </location>
    <ligand>
        <name>UDP-alpha-D-glucose</name>
        <dbReference type="ChEBI" id="CHEBI:58885"/>
    </ligand>
</feature>
<feature type="binding site" evidence="1">
    <location>
        <position position="360"/>
    </location>
    <ligand>
        <name>UDP-alpha-D-glucose</name>
        <dbReference type="ChEBI" id="CHEBI:58885"/>
    </ligand>
</feature>
<feature type="binding site" evidence="1">
    <location>
        <position position="363"/>
    </location>
    <ligand>
        <name>UDP-alpha-D-glucose</name>
        <dbReference type="ChEBI" id="CHEBI:58885"/>
    </ligand>
</feature>
<feature type="binding site" evidence="1">
    <location>
        <position position="364"/>
    </location>
    <ligand>
        <name>UDP-alpha-D-glucose</name>
        <dbReference type="ChEBI" id="CHEBI:58885"/>
    </ligand>
</feature>
<feature type="binding site" evidence="1">
    <location>
        <position position="365"/>
    </location>
    <ligand>
        <name>UDP-alpha-D-glucose</name>
        <dbReference type="ChEBI" id="CHEBI:58885"/>
    </ligand>
</feature>
<feature type="binding site" evidence="1">
    <location>
        <position position="368"/>
    </location>
    <ligand>
        <name>UDP-alpha-D-glucose</name>
        <dbReference type="ChEBI" id="CHEBI:58885"/>
    </ligand>
</feature>
<feature type="binding site" evidence="3">
    <location>
        <position position="383"/>
    </location>
    <ligand>
        <name>an anthocyanidin</name>
        <dbReference type="ChEBI" id="CHEBI:143576"/>
    </ligand>
</feature>
<feature type="binding site" evidence="1">
    <location>
        <position position="384"/>
    </location>
    <ligand>
        <name>UDP-alpha-D-glucose</name>
        <dbReference type="ChEBI" id="CHEBI:58885"/>
    </ligand>
</feature>
<feature type="binding site" evidence="1">
    <location>
        <position position="385"/>
    </location>
    <ligand>
        <name>UDP-alpha-D-glucose</name>
        <dbReference type="ChEBI" id="CHEBI:58885"/>
    </ligand>
</feature>
<accession>Q5VMI0</accession>
<accession>B9FST5</accession>
<evidence type="ECO:0000250" key="1">
    <source>
        <dbReference type="UniProtKB" id="A0A0A1HA03"/>
    </source>
</evidence>
<evidence type="ECO:0000250" key="2">
    <source>
        <dbReference type="UniProtKB" id="C3W7B0"/>
    </source>
</evidence>
<evidence type="ECO:0000250" key="3">
    <source>
        <dbReference type="UniProtKB" id="P51094"/>
    </source>
</evidence>
<evidence type="ECO:0000305" key="4"/>
<evidence type="ECO:0000312" key="5">
    <source>
        <dbReference type="EMBL" id="ABE02743.1"/>
    </source>
</evidence>
<evidence type="ECO:0000312" key="6">
    <source>
        <dbReference type="EMBL" id="BAD69117.1"/>
    </source>
</evidence>
<evidence type="ECO:0000312" key="7">
    <source>
        <dbReference type="EMBL" id="BAD69345.1"/>
    </source>
</evidence>
<evidence type="ECO:0000312" key="8">
    <source>
        <dbReference type="EMBL" id="BAS97297.1"/>
    </source>
</evidence>
<evidence type="ECO:0000312" key="9">
    <source>
        <dbReference type="EMBL" id="EEE65546.1"/>
    </source>
</evidence>
<evidence type="ECO:0000312" key="10">
    <source>
        <dbReference type="Proteomes" id="UP000059680"/>
    </source>
</evidence>